<sequence>MEDLQLVLFVLGAIAIVAVLVHGFWSIRRQQPKSLKDSPMGNFYKKQAEKGESIPKRIDAEGFDADGIGAVRVRKAGELAPNNETPTANPYLKQEVKLETKPQELTSPEFKAELKQGLKPELKVEAKHEPIPAQPDFSLQPPVAKEQHRGPKVSRQEPVLGTQVPQMGQSHAAIVAQKAAEQEQALRAAPQQSALFEENEHQADHQEEAFVEQAAEDELGEPRDVLVLHVVAKDGQQLNGAELLPCFLTLNFKYGDMNIFHRHVDNAGNGKVLFSIANMLKPGVFDPDNMEQFSTQGVVFFMTLPCYGDALMNFSIMLNSARQLAEEIDAVVLDGQRLPWGEFTKQDYLHRIRANA</sequence>
<feature type="chain" id="PRO_1000015153" description="Cell division protein ZipA">
    <location>
        <begin position="1"/>
        <end position="356"/>
    </location>
</feature>
<feature type="topological domain" description="Periplasmic" evidence="1">
    <location>
        <begin position="1"/>
        <end position="6"/>
    </location>
</feature>
<feature type="transmembrane region" description="Helical" evidence="1">
    <location>
        <begin position="7"/>
        <end position="27"/>
    </location>
</feature>
<feature type="topological domain" description="Cytoplasmic" evidence="1">
    <location>
        <begin position="28"/>
        <end position="356"/>
    </location>
</feature>
<feature type="region of interest" description="Disordered" evidence="2">
    <location>
        <begin position="132"/>
        <end position="155"/>
    </location>
</feature>
<comment type="function">
    <text evidence="1">Essential cell division protein that stabilizes the FtsZ protofilaments by cross-linking them and that serves as a cytoplasmic membrane anchor for the Z ring. Also required for the recruitment to the septal ring of downstream cell division proteins.</text>
</comment>
<comment type="subunit">
    <text evidence="1">Interacts with FtsZ via their C-terminal domains.</text>
</comment>
<comment type="subcellular location">
    <subcellularLocation>
        <location evidence="1">Cell inner membrane</location>
        <topology evidence="1">Single-pass type I membrane protein</topology>
    </subcellularLocation>
    <text evidence="1">Localizes to the Z ring in an FtsZ-dependent manner.</text>
</comment>
<comment type="similarity">
    <text evidence="1">Belongs to the ZipA family.</text>
</comment>
<protein>
    <recommendedName>
        <fullName evidence="1">Cell division protein ZipA</fullName>
    </recommendedName>
</protein>
<reference key="1">
    <citation type="submission" date="2007-07" db="EMBL/GenBank/DDBJ databases">
        <title>Complete sequence of chromosome of Shewanella baltica OS185.</title>
        <authorList>
            <consortium name="US DOE Joint Genome Institute"/>
            <person name="Copeland A."/>
            <person name="Lucas S."/>
            <person name="Lapidus A."/>
            <person name="Barry K."/>
            <person name="Glavina del Rio T."/>
            <person name="Dalin E."/>
            <person name="Tice H."/>
            <person name="Pitluck S."/>
            <person name="Sims D."/>
            <person name="Brettin T."/>
            <person name="Bruce D."/>
            <person name="Detter J.C."/>
            <person name="Han C."/>
            <person name="Schmutz J."/>
            <person name="Larimer F."/>
            <person name="Land M."/>
            <person name="Hauser L."/>
            <person name="Kyrpides N."/>
            <person name="Mikhailova N."/>
            <person name="Brettar I."/>
            <person name="Rodrigues J."/>
            <person name="Konstantinidis K."/>
            <person name="Tiedje J."/>
            <person name="Richardson P."/>
        </authorList>
    </citation>
    <scope>NUCLEOTIDE SEQUENCE [LARGE SCALE GENOMIC DNA]</scope>
    <source>
        <strain>OS185</strain>
    </source>
</reference>
<name>ZIPA_SHEB8</name>
<organism>
    <name type="scientific">Shewanella baltica (strain OS185)</name>
    <dbReference type="NCBI Taxonomy" id="402882"/>
    <lineage>
        <taxon>Bacteria</taxon>
        <taxon>Pseudomonadati</taxon>
        <taxon>Pseudomonadota</taxon>
        <taxon>Gammaproteobacteria</taxon>
        <taxon>Alteromonadales</taxon>
        <taxon>Shewanellaceae</taxon>
        <taxon>Shewanella</taxon>
    </lineage>
</organism>
<accession>A6WPS6</accession>
<evidence type="ECO:0000255" key="1">
    <source>
        <dbReference type="HAMAP-Rule" id="MF_00509"/>
    </source>
</evidence>
<evidence type="ECO:0000256" key="2">
    <source>
        <dbReference type="SAM" id="MobiDB-lite"/>
    </source>
</evidence>
<proteinExistence type="inferred from homology"/>
<gene>
    <name evidence="1" type="primary">zipA</name>
    <name type="ordered locus">Shew185_2680</name>
</gene>
<dbReference type="EMBL" id="CP000753">
    <property type="protein sequence ID" value="ABS08815.1"/>
    <property type="molecule type" value="Genomic_DNA"/>
</dbReference>
<dbReference type="RefSeq" id="WP_006085395.1">
    <property type="nucleotide sequence ID" value="NC_009665.1"/>
</dbReference>
<dbReference type="SMR" id="A6WPS6"/>
<dbReference type="GeneID" id="11772855"/>
<dbReference type="KEGG" id="sbm:Shew185_2680"/>
<dbReference type="HOGENOM" id="CLU_030174_1_0_6"/>
<dbReference type="GO" id="GO:0032153">
    <property type="term" value="C:cell division site"/>
    <property type="evidence" value="ECO:0007669"/>
    <property type="project" value="UniProtKB-UniRule"/>
</dbReference>
<dbReference type="GO" id="GO:0005886">
    <property type="term" value="C:plasma membrane"/>
    <property type="evidence" value="ECO:0007669"/>
    <property type="project" value="UniProtKB-SubCell"/>
</dbReference>
<dbReference type="GO" id="GO:0000917">
    <property type="term" value="P:division septum assembly"/>
    <property type="evidence" value="ECO:0007669"/>
    <property type="project" value="TreeGrafter"/>
</dbReference>
<dbReference type="GO" id="GO:0043093">
    <property type="term" value="P:FtsZ-dependent cytokinesis"/>
    <property type="evidence" value="ECO:0007669"/>
    <property type="project" value="UniProtKB-UniRule"/>
</dbReference>
<dbReference type="FunFam" id="3.30.1400.10:FF:000001">
    <property type="entry name" value="Cell division protein ZipA"/>
    <property type="match status" value="1"/>
</dbReference>
<dbReference type="Gene3D" id="3.30.1400.10">
    <property type="entry name" value="ZipA, C-terminal FtsZ-binding domain"/>
    <property type="match status" value="1"/>
</dbReference>
<dbReference type="HAMAP" id="MF_00509">
    <property type="entry name" value="ZipA"/>
    <property type="match status" value="1"/>
</dbReference>
<dbReference type="InterPro" id="IPR011919">
    <property type="entry name" value="Cell_div_ZipA"/>
</dbReference>
<dbReference type="InterPro" id="IPR007449">
    <property type="entry name" value="ZipA_FtsZ-bd_C"/>
</dbReference>
<dbReference type="InterPro" id="IPR036765">
    <property type="entry name" value="ZipA_FtsZ-bd_C_sf"/>
</dbReference>
<dbReference type="NCBIfam" id="TIGR02205">
    <property type="entry name" value="septum_zipA"/>
    <property type="match status" value="1"/>
</dbReference>
<dbReference type="PANTHER" id="PTHR38685">
    <property type="entry name" value="CELL DIVISION PROTEIN ZIPA"/>
    <property type="match status" value="1"/>
</dbReference>
<dbReference type="PANTHER" id="PTHR38685:SF1">
    <property type="entry name" value="CELL DIVISION PROTEIN ZIPA"/>
    <property type="match status" value="1"/>
</dbReference>
<dbReference type="Pfam" id="PF04354">
    <property type="entry name" value="ZipA_C"/>
    <property type="match status" value="1"/>
</dbReference>
<dbReference type="SMART" id="SM00771">
    <property type="entry name" value="ZipA_C"/>
    <property type="match status" value="1"/>
</dbReference>
<dbReference type="SUPFAM" id="SSF64383">
    <property type="entry name" value="Cell-division protein ZipA, C-terminal domain"/>
    <property type="match status" value="1"/>
</dbReference>
<keyword id="KW-0131">Cell cycle</keyword>
<keyword id="KW-0132">Cell division</keyword>
<keyword id="KW-0997">Cell inner membrane</keyword>
<keyword id="KW-1003">Cell membrane</keyword>
<keyword id="KW-0472">Membrane</keyword>
<keyword id="KW-0812">Transmembrane</keyword>
<keyword id="KW-1133">Transmembrane helix</keyword>